<evidence type="ECO:0000255" key="1">
    <source>
        <dbReference type="HAMAP-Rule" id="MF_00537"/>
    </source>
</evidence>
<evidence type="ECO:0000305" key="2"/>
<name>RS14_STAAR</name>
<feature type="chain" id="PRO_0000130935" description="Small ribosomal subunit protein uS14A">
    <location>
        <begin position="1"/>
        <end position="89"/>
    </location>
</feature>
<protein>
    <recommendedName>
        <fullName evidence="1">Small ribosomal subunit protein uS14A</fullName>
    </recommendedName>
    <alternativeName>
        <fullName evidence="2">30S ribosomal protein S14</fullName>
    </alternativeName>
</protein>
<keyword id="KW-0687">Ribonucleoprotein</keyword>
<keyword id="KW-0689">Ribosomal protein</keyword>
<keyword id="KW-0694">RNA-binding</keyword>
<keyword id="KW-0699">rRNA-binding</keyword>
<comment type="function">
    <text evidence="1">Binds 16S rRNA, required for the assembly of 30S particles and may also be responsible for determining the conformation of the 16S rRNA at the A site.</text>
</comment>
<comment type="subunit">
    <text evidence="1">Part of the 30S ribosomal subunit. Contacts proteins S3 and S10.</text>
</comment>
<comment type="similarity">
    <text evidence="1">Belongs to the universal ribosomal protein uS14 family.</text>
</comment>
<dbReference type="EMBL" id="BX571856">
    <property type="protein sequence ID" value="CAG40345.1"/>
    <property type="molecule type" value="Genomic_DNA"/>
</dbReference>
<dbReference type="RefSeq" id="WP_001085657.1">
    <property type="nucleotide sequence ID" value="NC_002952.2"/>
</dbReference>
<dbReference type="SMR" id="Q6GH70"/>
<dbReference type="KEGG" id="sar:SAR1346"/>
<dbReference type="HOGENOM" id="CLU_139869_0_0_9"/>
<dbReference type="Proteomes" id="UP000000596">
    <property type="component" value="Chromosome"/>
</dbReference>
<dbReference type="GO" id="GO:0005737">
    <property type="term" value="C:cytoplasm"/>
    <property type="evidence" value="ECO:0007669"/>
    <property type="project" value="UniProtKB-ARBA"/>
</dbReference>
<dbReference type="GO" id="GO:0015935">
    <property type="term" value="C:small ribosomal subunit"/>
    <property type="evidence" value="ECO:0007669"/>
    <property type="project" value="TreeGrafter"/>
</dbReference>
<dbReference type="GO" id="GO:0019843">
    <property type="term" value="F:rRNA binding"/>
    <property type="evidence" value="ECO:0007669"/>
    <property type="project" value="UniProtKB-UniRule"/>
</dbReference>
<dbReference type="GO" id="GO:0003735">
    <property type="term" value="F:structural constituent of ribosome"/>
    <property type="evidence" value="ECO:0007669"/>
    <property type="project" value="InterPro"/>
</dbReference>
<dbReference type="GO" id="GO:0006412">
    <property type="term" value="P:translation"/>
    <property type="evidence" value="ECO:0007669"/>
    <property type="project" value="UniProtKB-UniRule"/>
</dbReference>
<dbReference type="FunFam" id="4.10.830.10:FF:000003">
    <property type="entry name" value="30S ribosomal protein S14"/>
    <property type="match status" value="1"/>
</dbReference>
<dbReference type="Gene3D" id="4.10.830.10">
    <property type="entry name" value="30s Ribosomal Protein S14, Chain N"/>
    <property type="match status" value="1"/>
</dbReference>
<dbReference type="HAMAP" id="MF_00537">
    <property type="entry name" value="Ribosomal_uS14_1"/>
    <property type="match status" value="1"/>
</dbReference>
<dbReference type="InterPro" id="IPR001209">
    <property type="entry name" value="Ribosomal_uS14"/>
</dbReference>
<dbReference type="InterPro" id="IPR023036">
    <property type="entry name" value="Ribosomal_uS14_bac/plastid"/>
</dbReference>
<dbReference type="InterPro" id="IPR018271">
    <property type="entry name" value="Ribosomal_uS14_CS"/>
</dbReference>
<dbReference type="InterPro" id="IPR043140">
    <property type="entry name" value="Ribosomal_uS14_sf"/>
</dbReference>
<dbReference type="NCBIfam" id="NF006477">
    <property type="entry name" value="PRK08881.1"/>
    <property type="match status" value="1"/>
</dbReference>
<dbReference type="PANTHER" id="PTHR19836">
    <property type="entry name" value="30S RIBOSOMAL PROTEIN S14"/>
    <property type="match status" value="1"/>
</dbReference>
<dbReference type="PANTHER" id="PTHR19836:SF19">
    <property type="entry name" value="SMALL RIBOSOMAL SUBUNIT PROTEIN US14M"/>
    <property type="match status" value="1"/>
</dbReference>
<dbReference type="Pfam" id="PF00253">
    <property type="entry name" value="Ribosomal_S14"/>
    <property type="match status" value="1"/>
</dbReference>
<dbReference type="SUPFAM" id="SSF57716">
    <property type="entry name" value="Glucocorticoid receptor-like (DNA-binding domain)"/>
    <property type="match status" value="1"/>
</dbReference>
<dbReference type="PROSITE" id="PS00527">
    <property type="entry name" value="RIBOSOMAL_S14"/>
    <property type="match status" value="1"/>
</dbReference>
<organism>
    <name type="scientific">Staphylococcus aureus (strain MRSA252)</name>
    <dbReference type="NCBI Taxonomy" id="282458"/>
    <lineage>
        <taxon>Bacteria</taxon>
        <taxon>Bacillati</taxon>
        <taxon>Bacillota</taxon>
        <taxon>Bacilli</taxon>
        <taxon>Bacillales</taxon>
        <taxon>Staphylococcaceae</taxon>
        <taxon>Staphylococcus</taxon>
    </lineage>
</organism>
<reference key="1">
    <citation type="journal article" date="2004" name="Proc. Natl. Acad. Sci. U.S.A.">
        <title>Complete genomes of two clinical Staphylococcus aureus strains: evidence for the rapid evolution of virulence and drug resistance.</title>
        <authorList>
            <person name="Holden M.T.G."/>
            <person name="Feil E.J."/>
            <person name="Lindsay J.A."/>
            <person name="Peacock S.J."/>
            <person name="Day N.P.J."/>
            <person name="Enright M.C."/>
            <person name="Foster T.J."/>
            <person name="Moore C.E."/>
            <person name="Hurst L."/>
            <person name="Atkin R."/>
            <person name="Barron A."/>
            <person name="Bason N."/>
            <person name="Bentley S.D."/>
            <person name="Chillingworth C."/>
            <person name="Chillingworth T."/>
            <person name="Churcher C."/>
            <person name="Clark L."/>
            <person name="Corton C."/>
            <person name="Cronin A."/>
            <person name="Doggett J."/>
            <person name="Dowd L."/>
            <person name="Feltwell T."/>
            <person name="Hance Z."/>
            <person name="Harris B."/>
            <person name="Hauser H."/>
            <person name="Holroyd S."/>
            <person name="Jagels K."/>
            <person name="James K.D."/>
            <person name="Lennard N."/>
            <person name="Line A."/>
            <person name="Mayes R."/>
            <person name="Moule S."/>
            <person name="Mungall K."/>
            <person name="Ormond D."/>
            <person name="Quail M.A."/>
            <person name="Rabbinowitsch E."/>
            <person name="Rutherford K.M."/>
            <person name="Sanders M."/>
            <person name="Sharp S."/>
            <person name="Simmonds M."/>
            <person name="Stevens K."/>
            <person name="Whitehead S."/>
            <person name="Barrell B.G."/>
            <person name="Spratt B.G."/>
            <person name="Parkhill J."/>
        </authorList>
    </citation>
    <scope>NUCLEOTIDE SEQUENCE [LARGE SCALE GENOMIC DNA]</scope>
    <source>
        <strain>MRSA252</strain>
    </source>
</reference>
<proteinExistence type="inferred from homology"/>
<accession>Q6GH70</accession>
<sequence>MAKKSKIAKERKREELVNKYYELRKELKAKGDYETLRKLPRDSSPTRLTRRCKVTGRPRGVLRKFEMSRIAFREHAHKGQIPGVKKSSW</sequence>
<gene>
    <name evidence="1" type="primary">rpsN</name>
    <name type="synonym">rpsN2</name>
    <name type="ordered locus">SAR1346</name>
</gene>